<name>NUOD_HELAH</name>
<reference key="1">
    <citation type="journal article" date="2006" name="PLoS Genet.">
        <title>Who ate whom? Adaptive Helicobacter genomic changes that accompanied a host jump from early humans to large felines.</title>
        <authorList>
            <person name="Eppinger M."/>
            <person name="Baar C."/>
            <person name="Linz B."/>
            <person name="Raddatz G."/>
            <person name="Lanz C."/>
            <person name="Keller H."/>
            <person name="Morelli G."/>
            <person name="Gressmann H."/>
            <person name="Achtman M."/>
            <person name="Schuster S.C."/>
        </authorList>
    </citation>
    <scope>NUCLEOTIDE SEQUENCE [LARGE SCALE GENOMIC DNA]</scope>
    <source>
        <strain>Sheeba</strain>
    </source>
</reference>
<dbReference type="EC" id="7.1.1.-" evidence="1"/>
<dbReference type="EMBL" id="AM260522">
    <property type="protein sequence ID" value="CAJ99071.1"/>
    <property type="molecule type" value="Genomic_DNA"/>
</dbReference>
<dbReference type="RefSeq" id="WP_011577187.1">
    <property type="nucleotide sequence ID" value="NC_008229.1"/>
</dbReference>
<dbReference type="SMR" id="Q17Z55"/>
<dbReference type="STRING" id="382638.Hac_0221"/>
<dbReference type="GeneID" id="31757744"/>
<dbReference type="KEGG" id="hac:Hac_0221"/>
<dbReference type="eggNOG" id="COG0649">
    <property type="taxonomic scope" value="Bacteria"/>
</dbReference>
<dbReference type="HOGENOM" id="CLU_015134_1_2_7"/>
<dbReference type="OrthoDB" id="9801496at2"/>
<dbReference type="BioCyc" id="HACI382638:HAC_RS00990-MONOMER"/>
<dbReference type="Proteomes" id="UP000000775">
    <property type="component" value="Chromosome"/>
</dbReference>
<dbReference type="GO" id="GO:0005886">
    <property type="term" value="C:plasma membrane"/>
    <property type="evidence" value="ECO:0007669"/>
    <property type="project" value="UniProtKB-SubCell"/>
</dbReference>
<dbReference type="GO" id="GO:0051287">
    <property type="term" value="F:NAD binding"/>
    <property type="evidence" value="ECO:0007669"/>
    <property type="project" value="InterPro"/>
</dbReference>
<dbReference type="GO" id="GO:0050136">
    <property type="term" value="F:NADH:ubiquinone reductase (non-electrogenic) activity"/>
    <property type="evidence" value="ECO:0007669"/>
    <property type="project" value="UniProtKB-UniRule"/>
</dbReference>
<dbReference type="GO" id="GO:0048038">
    <property type="term" value="F:quinone binding"/>
    <property type="evidence" value="ECO:0007669"/>
    <property type="project" value="UniProtKB-KW"/>
</dbReference>
<dbReference type="Gene3D" id="1.10.645.10">
    <property type="entry name" value="Cytochrome-c3 Hydrogenase, chain B"/>
    <property type="match status" value="1"/>
</dbReference>
<dbReference type="HAMAP" id="MF_01358">
    <property type="entry name" value="NDH1_NuoD"/>
    <property type="match status" value="1"/>
</dbReference>
<dbReference type="InterPro" id="IPR001135">
    <property type="entry name" value="NADH_Q_OxRdtase_suD"/>
</dbReference>
<dbReference type="InterPro" id="IPR022885">
    <property type="entry name" value="NDH1_su_D/H"/>
</dbReference>
<dbReference type="InterPro" id="IPR029014">
    <property type="entry name" value="NiFe-Hase_large"/>
</dbReference>
<dbReference type="NCBIfam" id="TIGR01962">
    <property type="entry name" value="NuoD"/>
    <property type="match status" value="1"/>
</dbReference>
<dbReference type="NCBIfam" id="NF004739">
    <property type="entry name" value="PRK06075.1"/>
    <property type="match status" value="1"/>
</dbReference>
<dbReference type="PANTHER" id="PTHR11993:SF10">
    <property type="entry name" value="NADH DEHYDROGENASE [UBIQUINONE] IRON-SULFUR PROTEIN 2, MITOCHONDRIAL"/>
    <property type="match status" value="1"/>
</dbReference>
<dbReference type="PANTHER" id="PTHR11993">
    <property type="entry name" value="NADH-UBIQUINONE OXIDOREDUCTASE 49 KDA SUBUNIT"/>
    <property type="match status" value="1"/>
</dbReference>
<dbReference type="Pfam" id="PF00346">
    <property type="entry name" value="Complex1_49kDa"/>
    <property type="match status" value="1"/>
</dbReference>
<dbReference type="SUPFAM" id="SSF56762">
    <property type="entry name" value="HydB/Nqo4-like"/>
    <property type="match status" value="1"/>
</dbReference>
<comment type="function">
    <text evidence="1">NDH-1 shuttles electrons from NADH, via FMN and iron-sulfur (Fe-S) centers, to quinones in the respiratory chain. The immediate electron acceptor for the enzyme in this species is believed to be ubiquinone. Couples the redox reaction to proton translocation (for every two electrons transferred, four hydrogen ions are translocated across the cytoplasmic membrane), and thus conserves the redox energy in a proton gradient.</text>
</comment>
<comment type="catalytic activity">
    <reaction evidence="1">
        <text>a quinone + NADH + 5 H(+)(in) = a quinol + NAD(+) + 4 H(+)(out)</text>
        <dbReference type="Rhea" id="RHEA:57888"/>
        <dbReference type="ChEBI" id="CHEBI:15378"/>
        <dbReference type="ChEBI" id="CHEBI:24646"/>
        <dbReference type="ChEBI" id="CHEBI:57540"/>
        <dbReference type="ChEBI" id="CHEBI:57945"/>
        <dbReference type="ChEBI" id="CHEBI:132124"/>
    </reaction>
</comment>
<comment type="subunit">
    <text evidence="1">NDH-1 is composed of 14 different subunits. Subunits NuoB, C, D, E, F, and G constitute the peripheral sector of the complex.</text>
</comment>
<comment type="subcellular location">
    <subcellularLocation>
        <location evidence="1">Cell inner membrane</location>
        <topology evidence="1">Peripheral membrane protein</topology>
        <orientation evidence="1">Cytoplasmic side</orientation>
    </subcellularLocation>
</comment>
<comment type="similarity">
    <text evidence="1">Belongs to the complex I 49 kDa subunit family.</text>
</comment>
<organism>
    <name type="scientific">Helicobacter acinonychis (strain Sheeba)</name>
    <dbReference type="NCBI Taxonomy" id="382638"/>
    <lineage>
        <taxon>Bacteria</taxon>
        <taxon>Pseudomonadati</taxon>
        <taxon>Campylobacterota</taxon>
        <taxon>Epsilonproteobacteria</taxon>
        <taxon>Campylobacterales</taxon>
        <taxon>Helicobacteraceae</taxon>
        <taxon>Helicobacter</taxon>
    </lineage>
</organism>
<accession>Q17Z55</accession>
<sequence length="409" mass="46690">MAQNFTKLNPQFENIIFEHDDNQMVLNFGPQHPSSHGQLRLILELEGERIIKATPEIGYLHRGCEKLGENMTYNEYMPTTDRLDYTSSASNNYAYAHAVETLLNLEIPRRAQVIRTILLELNRMISHIFFISVHALDVGAMSVFLYAFKTREHGLDLMEDYCGARLTHNAIRIGGVPLDLPPNWLEGLKKFLGEMRECKKLIQGLLDKNRIWRMRLENVGVVTPKMAQSWGMSGIMLRGTGIAYDIRKEEPYELYRELDFDVPVGNYGDSYDRYCLYMLEIDESIRIIEQLIPMYAKTDTPIMAQNPHYISAPKEDIMTQNYALMQHFVLVAQGMRPPIGEVYAPTESPKGELGFFIHSEGESYPHRLKIRAPSFYHIGSLGDILVGQYLADAVTVIGSTNAVFGEVDR</sequence>
<evidence type="ECO:0000255" key="1">
    <source>
        <dbReference type="HAMAP-Rule" id="MF_01358"/>
    </source>
</evidence>
<gene>
    <name evidence="1" type="primary">nuoD</name>
    <name type="ordered locus">Hac_0221</name>
</gene>
<feature type="chain" id="PRO_0000371875" description="NADH-quinone oxidoreductase subunit D">
    <location>
        <begin position="1"/>
        <end position="409"/>
    </location>
</feature>
<protein>
    <recommendedName>
        <fullName evidence="1">NADH-quinone oxidoreductase subunit D</fullName>
        <ecNumber evidence="1">7.1.1.-</ecNumber>
    </recommendedName>
    <alternativeName>
        <fullName evidence="1">NADH dehydrogenase I subunit D</fullName>
    </alternativeName>
    <alternativeName>
        <fullName evidence="1">NDH-1 subunit D</fullName>
    </alternativeName>
</protein>
<keyword id="KW-0997">Cell inner membrane</keyword>
<keyword id="KW-1003">Cell membrane</keyword>
<keyword id="KW-0472">Membrane</keyword>
<keyword id="KW-0520">NAD</keyword>
<keyword id="KW-0874">Quinone</keyword>
<keyword id="KW-1278">Translocase</keyword>
<keyword id="KW-0813">Transport</keyword>
<keyword id="KW-0830">Ubiquinone</keyword>
<proteinExistence type="inferred from homology"/>